<accession>Q0IQN5</accession>
<accession>A0A0P0Y607</accession>
<accession>H2KWV1</accession>
<accession>Q6RUS5</accession>
<gene>
    <name type="primary">RAPTOR2</name>
    <name evidence="6" type="ordered locus">Os12g0110000</name>
    <name evidence="5" type="ordered locus">LOC_Os12g01922</name>
</gene>
<evidence type="ECO:0000256" key="1">
    <source>
        <dbReference type="SAM" id="MobiDB-lite"/>
    </source>
</evidence>
<evidence type="ECO:0000303" key="2">
    <source>
    </source>
</evidence>
<evidence type="ECO:0000305" key="3"/>
<evidence type="ECO:0000305" key="4">
    <source>
    </source>
</evidence>
<evidence type="ECO:0000312" key="5">
    <source>
        <dbReference type="EMBL" id="ABG21850.1"/>
    </source>
</evidence>
<evidence type="ECO:0000312" key="6">
    <source>
        <dbReference type="EMBL" id="BAT15547.1"/>
    </source>
</evidence>
<dbReference type="EMBL" id="DP000011">
    <property type="protein sequence ID" value="ABG21850.1"/>
    <property type="molecule type" value="Genomic_DNA"/>
</dbReference>
<dbReference type="EMBL" id="AP008218">
    <property type="protein sequence ID" value="BAF28980.1"/>
    <property type="status" value="ALT_SEQ"/>
    <property type="molecule type" value="Genomic_DNA"/>
</dbReference>
<dbReference type="EMBL" id="AP014968">
    <property type="protein sequence ID" value="BAT15547.1"/>
    <property type="status" value="ALT_SEQ"/>
    <property type="molecule type" value="Genomic_DNA"/>
</dbReference>
<dbReference type="EMBL" id="AY491431">
    <property type="protein sequence ID" value="AAR82959.1"/>
    <property type="molecule type" value="mRNA"/>
</dbReference>
<dbReference type="SMR" id="Q0IQN5"/>
<dbReference type="FunCoup" id="Q0IQN5">
    <property type="interactions" value="2074"/>
</dbReference>
<dbReference type="STRING" id="39947.Q0IQN5"/>
<dbReference type="iPTMnet" id="Q0IQN5"/>
<dbReference type="PaxDb" id="39947-Q0IQN5"/>
<dbReference type="EnsemblPlants" id="Os12t0110000-01">
    <property type="protein sequence ID" value="Os12t0110000-01"/>
    <property type="gene ID" value="Os12g0110000"/>
</dbReference>
<dbReference type="Gramene" id="Os12t0110000-01">
    <property type="protein sequence ID" value="Os12t0110000-01"/>
    <property type="gene ID" value="Os12g0110000"/>
</dbReference>
<dbReference type="KEGG" id="dosa:Os12g0110000"/>
<dbReference type="KEGG" id="osa:136354644"/>
<dbReference type="eggNOG" id="KOG1517">
    <property type="taxonomic scope" value="Eukaryota"/>
</dbReference>
<dbReference type="HOGENOM" id="CLU_001136_3_0_1"/>
<dbReference type="InParanoid" id="Q0IQN5"/>
<dbReference type="OrthoDB" id="10262360at2759"/>
<dbReference type="Proteomes" id="UP000000763">
    <property type="component" value="Chromosome 12"/>
</dbReference>
<dbReference type="Proteomes" id="UP000059680">
    <property type="component" value="Chromosome 12"/>
</dbReference>
<dbReference type="GO" id="GO:0005737">
    <property type="term" value="C:cytoplasm"/>
    <property type="evidence" value="ECO:0000318"/>
    <property type="project" value="GO_Central"/>
</dbReference>
<dbReference type="GO" id="GO:0031931">
    <property type="term" value="C:TORC1 complex"/>
    <property type="evidence" value="ECO:0000318"/>
    <property type="project" value="GO_Central"/>
</dbReference>
<dbReference type="GO" id="GO:0030674">
    <property type="term" value="F:protein-macromolecule adaptor activity"/>
    <property type="evidence" value="ECO:0000318"/>
    <property type="project" value="GO_Central"/>
</dbReference>
<dbReference type="GO" id="GO:0071230">
    <property type="term" value="P:cellular response to amino acid stimulus"/>
    <property type="evidence" value="ECO:0000318"/>
    <property type="project" value="GO_Central"/>
</dbReference>
<dbReference type="GO" id="GO:0009267">
    <property type="term" value="P:cellular response to starvation"/>
    <property type="evidence" value="ECO:0000318"/>
    <property type="project" value="GO_Central"/>
</dbReference>
<dbReference type="GO" id="GO:0030307">
    <property type="term" value="P:positive regulation of cell growth"/>
    <property type="evidence" value="ECO:0000318"/>
    <property type="project" value="GO_Central"/>
</dbReference>
<dbReference type="GO" id="GO:0010506">
    <property type="term" value="P:regulation of autophagy"/>
    <property type="evidence" value="ECO:0000318"/>
    <property type="project" value="GO_Central"/>
</dbReference>
<dbReference type="GO" id="GO:0031929">
    <property type="term" value="P:TOR signaling"/>
    <property type="evidence" value="ECO:0000318"/>
    <property type="project" value="GO_Central"/>
</dbReference>
<dbReference type="FunFam" id="1.25.10.10:FF:000145">
    <property type="entry name" value="Regulatory-associated protein of TOR 1"/>
    <property type="match status" value="1"/>
</dbReference>
<dbReference type="FunFam" id="2.130.10.10:FF:000647">
    <property type="entry name" value="Regulatory-associated protein of TOR 1"/>
    <property type="match status" value="1"/>
</dbReference>
<dbReference type="FunFam" id="2.130.10.10:FF:000825">
    <property type="entry name" value="Regulatory-associated protein of TOR 2"/>
    <property type="match status" value="1"/>
</dbReference>
<dbReference type="Gene3D" id="1.25.10.10">
    <property type="entry name" value="Leucine-rich Repeat Variant"/>
    <property type="match status" value="1"/>
</dbReference>
<dbReference type="Gene3D" id="2.130.10.10">
    <property type="entry name" value="YVTN repeat-like/Quinoprotein amine dehydrogenase"/>
    <property type="match status" value="2"/>
</dbReference>
<dbReference type="InterPro" id="IPR011989">
    <property type="entry name" value="ARM-like"/>
</dbReference>
<dbReference type="InterPro" id="IPR016024">
    <property type="entry name" value="ARM-type_fold"/>
</dbReference>
<dbReference type="InterPro" id="IPR004083">
    <property type="entry name" value="Raptor"/>
</dbReference>
<dbReference type="InterPro" id="IPR029347">
    <property type="entry name" value="Raptor_N"/>
</dbReference>
<dbReference type="InterPro" id="IPR015943">
    <property type="entry name" value="WD40/YVTN_repeat-like_dom_sf"/>
</dbReference>
<dbReference type="InterPro" id="IPR036322">
    <property type="entry name" value="WD40_repeat_dom_sf"/>
</dbReference>
<dbReference type="InterPro" id="IPR001680">
    <property type="entry name" value="WD40_rpt"/>
</dbReference>
<dbReference type="PANTHER" id="PTHR12848">
    <property type="entry name" value="REGULATORY-ASSOCIATED PROTEIN OF MTOR"/>
    <property type="match status" value="1"/>
</dbReference>
<dbReference type="PANTHER" id="PTHR12848:SF16">
    <property type="entry name" value="REGULATORY-ASSOCIATED PROTEIN OF MTOR"/>
    <property type="match status" value="1"/>
</dbReference>
<dbReference type="Pfam" id="PF14538">
    <property type="entry name" value="Raptor_N"/>
    <property type="match status" value="1"/>
</dbReference>
<dbReference type="Pfam" id="PF00400">
    <property type="entry name" value="WD40"/>
    <property type="match status" value="1"/>
</dbReference>
<dbReference type="PRINTS" id="PR01547">
    <property type="entry name" value="YEAST176DUF"/>
</dbReference>
<dbReference type="SMART" id="SM01302">
    <property type="entry name" value="Raptor_N"/>
    <property type="match status" value="1"/>
</dbReference>
<dbReference type="SMART" id="SM00320">
    <property type="entry name" value="WD40"/>
    <property type="match status" value="6"/>
</dbReference>
<dbReference type="SUPFAM" id="SSF48371">
    <property type="entry name" value="ARM repeat"/>
    <property type="match status" value="1"/>
</dbReference>
<dbReference type="SUPFAM" id="SSF50978">
    <property type="entry name" value="WD40 repeat-like"/>
    <property type="match status" value="1"/>
</dbReference>
<dbReference type="PROSITE" id="PS50082">
    <property type="entry name" value="WD_REPEATS_2"/>
    <property type="match status" value="1"/>
</dbReference>
<dbReference type="PROSITE" id="PS50294">
    <property type="entry name" value="WD_REPEATS_REGION"/>
    <property type="match status" value="1"/>
</dbReference>
<proteinExistence type="evidence at protein level"/>
<feature type="chain" id="PRO_0000409334" description="Regulatory-associated protein of TOR 2">
    <location>
        <begin position="1"/>
        <end position="1359"/>
    </location>
</feature>
<feature type="repeat" description="WD 1">
    <location>
        <begin position="1041"/>
        <end position="1080"/>
    </location>
</feature>
<feature type="repeat" description="WD 2">
    <location>
        <begin position="1087"/>
        <end position="1127"/>
    </location>
</feature>
<feature type="repeat" description="WD 3">
    <location>
        <begin position="1139"/>
        <end position="1178"/>
    </location>
</feature>
<feature type="repeat" description="WD 4">
    <location>
        <begin position="1181"/>
        <end position="1221"/>
    </location>
</feature>
<feature type="repeat" description="WD 5">
    <location>
        <begin position="1228"/>
        <end position="1269"/>
    </location>
</feature>
<feature type="repeat" description="WD 6">
    <location>
        <begin position="1273"/>
        <end position="1312"/>
    </location>
</feature>
<feature type="repeat" description="WD 7">
    <location>
        <begin position="1321"/>
        <end position="1359"/>
    </location>
</feature>
<feature type="region of interest" description="Disordered" evidence="1">
    <location>
        <begin position="17"/>
        <end position="64"/>
    </location>
</feature>
<feature type="region of interest" description="Disordered" evidence="1">
    <location>
        <begin position="782"/>
        <end position="819"/>
    </location>
</feature>
<feature type="compositionally biased region" description="Basic and acidic residues" evidence="1">
    <location>
        <begin position="32"/>
        <end position="50"/>
    </location>
</feature>
<feature type="compositionally biased region" description="Polar residues" evidence="1">
    <location>
        <begin position="782"/>
        <end position="805"/>
    </location>
</feature>
<feature type="compositionally biased region" description="Low complexity" evidence="1">
    <location>
        <begin position="806"/>
        <end position="819"/>
    </location>
</feature>
<feature type="sequence conflict" description="In Ref. 5; AAR82959." evidence="3" ref="5">
    <original>W</original>
    <variation>C</variation>
    <location>
        <position position="163"/>
    </location>
</feature>
<feature type="sequence conflict" description="In Ref. 5; AAR82959." evidence="3" ref="5">
    <original>Q</original>
    <variation>L</variation>
    <location>
        <position position="366"/>
    </location>
</feature>
<feature type="sequence conflict" description="In Ref. 5; AAR82959." evidence="3" ref="5">
    <original>R</original>
    <variation>G</variation>
    <location>
        <position position="479"/>
    </location>
</feature>
<feature type="sequence conflict" description="In Ref. 5; AAR82959." evidence="3" ref="5">
    <original>Y</original>
    <variation>D</variation>
    <location>
        <position position="977"/>
    </location>
</feature>
<feature type="sequence conflict" description="In Ref. 5; AAR82959." evidence="3" ref="5">
    <original>G</original>
    <variation>V</variation>
    <location>
        <position position="1142"/>
    </location>
</feature>
<feature type="sequence conflict" description="In Ref. 5; AAR82959." evidence="3" ref="5">
    <original>A</original>
    <variation>T</variation>
    <location>
        <position position="1273"/>
    </location>
</feature>
<feature type="sequence conflict" description="In Ref. 5; AAR82959." evidence="3" ref="5">
    <original>V</original>
    <variation>A</variation>
    <location>
        <position position="1283"/>
    </location>
</feature>
<name>RTOR2_ORYSJ</name>
<reference key="1">
    <citation type="journal article" date="2005" name="BMC Biol.">
        <title>The sequence of rice chromosomes 11 and 12, rich in disease resistance genes and recent gene duplications.</title>
        <authorList>
            <consortium name="The rice chromosomes 11 and 12 sequencing consortia"/>
        </authorList>
    </citation>
    <scope>NUCLEOTIDE SEQUENCE [LARGE SCALE GENOMIC DNA]</scope>
    <source>
        <strain>cv. Nipponbare</strain>
    </source>
</reference>
<reference key="2">
    <citation type="journal article" date="2005" name="Nature">
        <title>The map-based sequence of the rice genome.</title>
        <authorList>
            <consortium name="International rice genome sequencing project (IRGSP)"/>
        </authorList>
    </citation>
    <scope>NUCLEOTIDE SEQUENCE [LARGE SCALE GENOMIC DNA]</scope>
    <source>
        <strain>cv. Nipponbare</strain>
    </source>
</reference>
<reference key="3">
    <citation type="journal article" date="2008" name="Nucleic Acids Res.">
        <title>The rice annotation project database (RAP-DB): 2008 update.</title>
        <authorList>
            <consortium name="The rice annotation project (RAP)"/>
        </authorList>
    </citation>
    <scope>GENOME REANNOTATION</scope>
    <source>
        <strain>cv. Nipponbare</strain>
    </source>
</reference>
<reference key="4">
    <citation type="journal article" date="2013" name="Rice">
        <title>Improvement of the Oryza sativa Nipponbare reference genome using next generation sequence and optical map data.</title>
        <authorList>
            <person name="Kawahara Y."/>
            <person name="de la Bastide M."/>
            <person name="Hamilton J.P."/>
            <person name="Kanamori H."/>
            <person name="McCombie W.R."/>
            <person name="Ouyang S."/>
            <person name="Schwartz D.C."/>
            <person name="Tanaka T."/>
            <person name="Wu J."/>
            <person name="Zhou S."/>
            <person name="Childs K.L."/>
            <person name="Davidson R.M."/>
            <person name="Lin H."/>
            <person name="Quesada-Ocampo L."/>
            <person name="Vaillancourt B."/>
            <person name="Sakai H."/>
            <person name="Lee S.S."/>
            <person name="Kim J."/>
            <person name="Numa H."/>
            <person name="Itoh T."/>
            <person name="Buell C.R."/>
            <person name="Matsumoto T."/>
        </authorList>
    </citation>
    <scope>GENOME REANNOTATION</scope>
    <source>
        <strain>cv. Nipponbare</strain>
    </source>
</reference>
<reference key="5">
    <citation type="submission" date="2003-11" db="EMBL/GenBank/DDBJ databases">
        <authorList>
            <person name="Lu X."/>
            <person name="Gong H."/>
            <person name="Bai S."/>
        </authorList>
    </citation>
    <scope>NUCLEOTIDE SEQUENCE [MRNA] OF 118-1359</scope>
</reference>
<reference key="6">
    <citation type="journal article" date="2015" name="Mol. Genet. Genomics">
        <title>Evolutionary conservation of TORC1 components, TOR, Raptor, and LST8, between rice and yeast.</title>
        <authorList>
            <person name="Maegawa K."/>
            <person name="Takii R."/>
            <person name="Ushimaru T."/>
            <person name="Kozaki A."/>
        </authorList>
    </citation>
    <scope>FUNCTION</scope>
    <scope>SUBUNIT</scope>
</reference>
<keyword id="KW-0217">Developmental protein</keyword>
<keyword id="KW-0341">Growth regulation</keyword>
<keyword id="KW-1185">Reference proteome</keyword>
<keyword id="KW-0677">Repeat</keyword>
<keyword id="KW-0853">WD repeat</keyword>
<comment type="function">
    <text evidence="4">Component of TORC1 complex, which is an essential cell growth regulator that controls plant development. Acts by recruiting substrates for TOR. Acts by activating transcription, protein synthesis and ribosome biogenesis, and inhibiting mRNA degradation and autophagy.</text>
</comment>
<comment type="subunit">
    <text evidence="4">The target of rapamycin complex 1 (TORC1) is composed of at least RAPTOR, LST8 and TOR.</text>
</comment>
<comment type="similarity">
    <text evidence="3">Belongs to the WD repeat RAPTOR family.</text>
</comment>
<comment type="sequence caution" evidence="3">
    <conflict type="erroneous gene model prediction">
        <sequence resource="EMBL-CDS" id="BAF28980"/>
    </conflict>
</comment>
<comment type="sequence caution" evidence="3">
    <conflict type="erroneous gene model prediction">
        <sequence resource="EMBL-CDS" id="BAT15547"/>
    </conflict>
</comment>
<organism>
    <name type="scientific">Oryza sativa subsp. japonica</name>
    <name type="common">Rice</name>
    <dbReference type="NCBI Taxonomy" id="39947"/>
    <lineage>
        <taxon>Eukaryota</taxon>
        <taxon>Viridiplantae</taxon>
        <taxon>Streptophyta</taxon>
        <taxon>Embryophyta</taxon>
        <taxon>Tracheophyta</taxon>
        <taxon>Spermatophyta</taxon>
        <taxon>Magnoliopsida</taxon>
        <taxon>Liliopsida</taxon>
        <taxon>Poales</taxon>
        <taxon>Poaceae</taxon>
        <taxon>BOP clade</taxon>
        <taxon>Oryzoideae</taxon>
        <taxon>Oryzeae</taxon>
        <taxon>Oryzinae</taxon>
        <taxon>Oryza</taxon>
        <taxon>Oryza sativa</taxon>
    </lineage>
</organism>
<sequence length="1359" mass="149808">MALGDLMASRLVHSSSSSAAPSAALPNHHTNHLVDDHLPVENGPDPRRDVPDEEPPPPPPPQVALLPQVVVLCEQRHEGFDEAAAAAAGPSTSGPVSKWRPKDRMKTGCVALVLCLNISVDPPDVIKISPCARKECWIDPFSMAPPKALETIGKTLHSQYERWQPKARYKLQLDPTLEEVKKLCNTCRKFARTERVLFHYNGHGVPKPTANGEIWVFNKSYTQYIPLPITDLDSWLKTPSIYVFDCSAAGMIVKAFLERLDWSSSSSASSSKDCILLAACEAHQTLPQSAEFPADVFTACLTTPIKMALHWFCNRSLLRDSMEHNLIDQIPGRQNDRKTLLGELNWIFTAITDTIAWNVLPHDLFQRLFRQDLLVASLFRNFLLAERIMRSANCSPISYPLLPPTHQHHMWDAWDMAAEICLSKLPQLIADPNAEFQPSPFFTEQLTAFEVWLDHGSEDKKPPEQLPIVLQVLLSQSHRFRALVLLGRFLDMGPWAVDLALSVGIFPYVLKLLQTSAMELRQILVFIWTKILSLDKSCQVDLVKDGGHAYFIRFLDSLDAYPEQRAMAAFVLAVIVDGHRIGQEACANAGLIDVCLRHLQPENPNDAQTEPLLLQWLCLCLGKLWEDFPEAQLLGLQSNAPEIVICLLSEPQPEVRASAVFALGNLVDIGSPSLNGADDDSDDDEKVRAEINVVRSLLQISSDGSPLVRSEVAVALTRFAMGHNKHIKSVAAEYWKPQTNSLLKSLPSLANINSSNVYSPSSLIQGSSGLASHIGPVLRVGSDNSATARDGRISTSSPIATNSIMHGSPQSDDSSQHSDSGILLRENASNGGLNYSRSRPIDNGIYSQFIATMCNVAKDPYPRIASIGKRALSLIGVEQVSMRNSRLSNGGAHPGETSVPPSSNFGMARSSSWFDMNSGNFSVAFRTPPVSPPQHDYLTGLRRVCSMEFRPHVLNSPDGLADPLLSSSAAPSNMGLYILPQSLIYRWSCGHFSRPLLTGSDDNEEANARREERERIAMDCIAKCQRSSCKMTSQIASWDTRFELGTKASLLLPFSPIVVAADENEQIRVWNYDDALPVNTFENHKLSDRGLSKLLLINELDDSLLLVGSSDGNVRIWRNYTQKGGQKLVTAFSSVQGYRSAGRSIVFDWQQQSGYLYASGDMSSILVWDLDKEQVNTIQSTADSGISALSASQVRCGQFAAGFLDASVRIFDVRTPDRLVYTARPHAPRSEKVVGIGFQPGFDPYKIVSASQAGDIQFLDVRRASEPYLTIEAHRGSLTALAVHRHAPVIASGSAKQMIKVFSLEGEQLTIIRYQPSFMGQRIGSVNCLSFHRYKSLLAAGAGDNALVSIYAEDNYQVR</sequence>
<protein>
    <recommendedName>
        <fullName evidence="3">Regulatory-associated protein of TOR 2</fullName>
    </recommendedName>
    <alternativeName>
        <fullName evidence="2">Protein RAPTOR 2</fullName>
        <shortName evidence="2">OsRAPTOR2</shortName>
    </alternativeName>
</protein>